<proteinExistence type="inferred from homology"/>
<comment type="function">
    <text evidence="1">Is required not only for elongation of protein synthesis but also for the initiation of all mRNA translation through initiator tRNA(fMet) aminoacylation.</text>
</comment>
<comment type="catalytic activity">
    <reaction evidence="1">
        <text>tRNA(Met) + L-methionine + ATP = L-methionyl-tRNA(Met) + AMP + diphosphate</text>
        <dbReference type="Rhea" id="RHEA:13481"/>
        <dbReference type="Rhea" id="RHEA-COMP:9667"/>
        <dbReference type="Rhea" id="RHEA-COMP:9698"/>
        <dbReference type="ChEBI" id="CHEBI:30616"/>
        <dbReference type="ChEBI" id="CHEBI:33019"/>
        <dbReference type="ChEBI" id="CHEBI:57844"/>
        <dbReference type="ChEBI" id="CHEBI:78442"/>
        <dbReference type="ChEBI" id="CHEBI:78530"/>
        <dbReference type="ChEBI" id="CHEBI:456215"/>
        <dbReference type="EC" id="6.1.1.10"/>
    </reaction>
</comment>
<comment type="cofactor">
    <cofactor evidence="1">
        <name>Zn(2+)</name>
        <dbReference type="ChEBI" id="CHEBI:29105"/>
    </cofactor>
    <text evidence="1">Binds 1 zinc ion per subunit.</text>
</comment>
<comment type="subunit">
    <text evidence="1">Homodimer.</text>
</comment>
<comment type="subcellular location">
    <subcellularLocation>
        <location evidence="1">Cytoplasm</location>
    </subcellularLocation>
</comment>
<comment type="similarity">
    <text evidence="1">Belongs to the class-I aminoacyl-tRNA synthetase family. MetG type 1 subfamily.</text>
</comment>
<accession>B2S0T6</accession>
<dbReference type="EC" id="6.1.1.10" evidence="1"/>
<dbReference type="EMBL" id="CP000048">
    <property type="protein sequence ID" value="AAX17092.1"/>
    <property type="molecule type" value="Genomic_DNA"/>
</dbReference>
<dbReference type="SMR" id="B2S0T6"/>
<dbReference type="KEGG" id="bhr:BH0587"/>
<dbReference type="HOGENOM" id="CLU_009710_3_2_12"/>
<dbReference type="Proteomes" id="UP000008834">
    <property type="component" value="Chromosome"/>
</dbReference>
<dbReference type="GO" id="GO:0017101">
    <property type="term" value="C:aminoacyl-tRNA synthetase multienzyme complex"/>
    <property type="evidence" value="ECO:0007669"/>
    <property type="project" value="TreeGrafter"/>
</dbReference>
<dbReference type="GO" id="GO:0005829">
    <property type="term" value="C:cytosol"/>
    <property type="evidence" value="ECO:0007669"/>
    <property type="project" value="TreeGrafter"/>
</dbReference>
<dbReference type="GO" id="GO:0005524">
    <property type="term" value="F:ATP binding"/>
    <property type="evidence" value="ECO:0007669"/>
    <property type="project" value="UniProtKB-UniRule"/>
</dbReference>
<dbReference type="GO" id="GO:0046872">
    <property type="term" value="F:metal ion binding"/>
    <property type="evidence" value="ECO:0007669"/>
    <property type="project" value="UniProtKB-KW"/>
</dbReference>
<dbReference type="GO" id="GO:0004825">
    <property type="term" value="F:methionine-tRNA ligase activity"/>
    <property type="evidence" value="ECO:0007669"/>
    <property type="project" value="UniProtKB-UniRule"/>
</dbReference>
<dbReference type="GO" id="GO:0000049">
    <property type="term" value="F:tRNA binding"/>
    <property type="evidence" value="ECO:0007669"/>
    <property type="project" value="UniProtKB-KW"/>
</dbReference>
<dbReference type="GO" id="GO:0006431">
    <property type="term" value="P:methionyl-tRNA aminoacylation"/>
    <property type="evidence" value="ECO:0007669"/>
    <property type="project" value="UniProtKB-UniRule"/>
</dbReference>
<dbReference type="CDD" id="cd07957">
    <property type="entry name" value="Anticodon_Ia_Met"/>
    <property type="match status" value="1"/>
</dbReference>
<dbReference type="CDD" id="cd00814">
    <property type="entry name" value="MetRS_core"/>
    <property type="match status" value="1"/>
</dbReference>
<dbReference type="CDD" id="cd02153">
    <property type="entry name" value="tRNA_bindingDomain"/>
    <property type="match status" value="1"/>
</dbReference>
<dbReference type="FunFam" id="2.20.28.20:FF:000001">
    <property type="entry name" value="Methionine--tRNA ligase"/>
    <property type="match status" value="1"/>
</dbReference>
<dbReference type="Gene3D" id="3.40.50.620">
    <property type="entry name" value="HUPs"/>
    <property type="match status" value="1"/>
</dbReference>
<dbReference type="Gene3D" id="1.10.730.10">
    <property type="entry name" value="Isoleucyl-tRNA Synthetase, Domain 1"/>
    <property type="match status" value="1"/>
</dbReference>
<dbReference type="Gene3D" id="2.20.28.20">
    <property type="entry name" value="Methionyl-tRNA synthetase, Zn-domain"/>
    <property type="match status" value="1"/>
</dbReference>
<dbReference type="Gene3D" id="2.40.50.140">
    <property type="entry name" value="Nucleic acid-binding proteins"/>
    <property type="match status" value="1"/>
</dbReference>
<dbReference type="HAMAP" id="MF_00098">
    <property type="entry name" value="Met_tRNA_synth_type1"/>
    <property type="match status" value="1"/>
</dbReference>
<dbReference type="InterPro" id="IPR001412">
    <property type="entry name" value="aa-tRNA-synth_I_CS"/>
</dbReference>
<dbReference type="InterPro" id="IPR041872">
    <property type="entry name" value="Anticodon_Met"/>
</dbReference>
<dbReference type="InterPro" id="IPR004495">
    <property type="entry name" value="Met-tRNA-synth_bsu_C"/>
</dbReference>
<dbReference type="InterPro" id="IPR023458">
    <property type="entry name" value="Met-tRNA_ligase_1"/>
</dbReference>
<dbReference type="InterPro" id="IPR014758">
    <property type="entry name" value="Met-tRNA_synth"/>
</dbReference>
<dbReference type="InterPro" id="IPR015413">
    <property type="entry name" value="Methionyl/Leucyl_tRNA_Synth"/>
</dbReference>
<dbReference type="InterPro" id="IPR033911">
    <property type="entry name" value="MetRS_core"/>
</dbReference>
<dbReference type="InterPro" id="IPR029038">
    <property type="entry name" value="MetRS_Zn"/>
</dbReference>
<dbReference type="InterPro" id="IPR012340">
    <property type="entry name" value="NA-bd_OB-fold"/>
</dbReference>
<dbReference type="InterPro" id="IPR014729">
    <property type="entry name" value="Rossmann-like_a/b/a_fold"/>
</dbReference>
<dbReference type="InterPro" id="IPR002547">
    <property type="entry name" value="tRNA-bd_dom"/>
</dbReference>
<dbReference type="InterPro" id="IPR009080">
    <property type="entry name" value="tRNAsynth_Ia_anticodon-bd"/>
</dbReference>
<dbReference type="NCBIfam" id="TIGR00398">
    <property type="entry name" value="metG"/>
    <property type="match status" value="1"/>
</dbReference>
<dbReference type="NCBIfam" id="TIGR00399">
    <property type="entry name" value="metG_C_term"/>
    <property type="match status" value="1"/>
</dbReference>
<dbReference type="NCBIfam" id="NF001100">
    <property type="entry name" value="PRK00133.1"/>
    <property type="match status" value="1"/>
</dbReference>
<dbReference type="PANTHER" id="PTHR45765">
    <property type="entry name" value="METHIONINE--TRNA LIGASE"/>
    <property type="match status" value="1"/>
</dbReference>
<dbReference type="PANTHER" id="PTHR45765:SF1">
    <property type="entry name" value="METHIONINE--TRNA LIGASE, CYTOPLASMIC"/>
    <property type="match status" value="1"/>
</dbReference>
<dbReference type="Pfam" id="PF19303">
    <property type="entry name" value="Anticodon_3"/>
    <property type="match status" value="1"/>
</dbReference>
<dbReference type="Pfam" id="PF09334">
    <property type="entry name" value="tRNA-synt_1g"/>
    <property type="match status" value="1"/>
</dbReference>
<dbReference type="Pfam" id="PF01588">
    <property type="entry name" value="tRNA_bind"/>
    <property type="match status" value="1"/>
</dbReference>
<dbReference type="PRINTS" id="PR01041">
    <property type="entry name" value="TRNASYNTHMET"/>
</dbReference>
<dbReference type="SUPFAM" id="SSF47323">
    <property type="entry name" value="Anticodon-binding domain of a subclass of class I aminoacyl-tRNA synthetases"/>
    <property type="match status" value="1"/>
</dbReference>
<dbReference type="SUPFAM" id="SSF57770">
    <property type="entry name" value="Methionyl-tRNA synthetase (MetRS), Zn-domain"/>
    <property type="match status" value="1"/>
</dbReference>
<dbReference type="SUPFAM" id="SSF50249">
    <property type="entry name" value="Nucleic acid-binding proteins"/>
    <property type="match status" value="1"/>
</dbReference>
<dbReference type="SUPFAM" id="SSF52374">
    <property type="entry name" value="Nucleotidylyl transferase"/>
    <property type="match status" value="1"/>
</dbReference>
<dbReference type="PROSITE" id="PS00178">
    <property type="entry name" value="AA_TRNA_LIGASE_I"/>
    <property type="match status" value="1"/>
</dbReference>
<dbReference type="PROSITE" id="PS50886">
    <property type="entry name" value="TRBD"/>
    <property type="match status" value="1"/>
</dbReference>
<keyword id="KW-0030">Aminoacyl-tRNA synthetase</keyword>
<keyword id="KW-0067">ATP-binding</keyword>
<keyword id="KW-0963">Cytoplasm</keyword>
<keyword id="KW-0436">Ligase</keyword>
<keyword id="KW-0479">Metal-binding</keyword>
<keyword id="KW-0547">Nucleotide-binding</keyword>
<keyword id="KW-0648">Protein biosynthesis</keyword>
<keyword id="KW-0694">RNA-binding</keyword>
<keyword id="KW-0820">tRNA-binding</keyword>
<keyword id="KW-0862">Zinc</keyword>
<reference key="1">
    <citation type="submission" date="2004-12" db="EMBL/GenBank/DDBJ databases">
        <title>The genome sequence of Borrelia hermsii and Borrelia turicatae: comparative analysis of two agents of endemic N. America relapsing fever.</title>
        <authorList>
            <person name="Porcella S.F."/>
            <person name="Raffel S.J."/>
            <person name="Schrumpf M.E."/>
            <person name="Montgomery B."/>
            <person name="Smith T."/>
            <person name="Schwan T.G."/>
        </authorList>
    </citation>
    <scope>NUCLEOTIDE SEQUENCE [LARGE SCALE GENOMIC DNA]</scope>
    <source>
        <strain>HS1 / DAH</strain>
    </source>
</reference>
<protein>
    <recommendedName>
        <fullName evidence="1">Methionine--tRNA ligase</fullName>
        <ecNumber evidence="1">6.1.1.10</ecNumber>
    </recommendedName>
    <alternativeName>
        <fullName evidence="1">Methionyl-tRNA synthetase</fullName>
        <shortName evidence="1">MetRS</shortName>
    </alternativeName>
</protein>
<name>SYM_BORHD</name>
<feature type="chain" id="PRO_1000093698" description="Methionine--tRNA ligase">
    <location>
        <begin position="1"/>
        <end position="729"/>
    </location>
</feature>
<feature type="domain" description="tRNA-binding" evidence="1">
    <location>
        <begin position="565"/>
        <end position="670"/>
    </location>
</feature>
<feature type="short sequence motif" description="'HIGH' region">
    <location>
        <begin position="12"/>
        <end position="22"/>
    </location>
</feature>
<feature type="short sequence motif" description="'KMSKS' region">
    <location>
        <begin position="330"/>
        <end position="334"/>
    </location>
</feature>
<feature type="binding site" evidence="1">
    <location>
        <position position="143"/>
    </location>
    <ligand>
        <name>Zn(2+)</name>
        <dbReference type="ChEBI" id="CHEBI:29105"/>
    </ligand>
</feature>
<feature type="binding site" evidence="1">
    <location>
        <position position="146"/>
    </location>
    <ligand>
        <name>Zn(2+)</name>
        <dbReference type="ChEBI" id="CHEBI:29105"/>
    </ligand>
</feature>
<feature type="binding site" evidence="1">
    <location>
        <position position="155"/>
    </location>
    <ligand>
        <name>Zn(2+)</name>
        <dbReference type="ChEBI" id="CHEBI:29105"/>
    </ligand>
</feature>
<feature type="binding site" evidence="1">
    <location>
        <position position="158"/>
    </location>
    <ligand>
        <name>Zn(2+)</name>
        <dbReference type="ChEBI" id="CHEBI:29105"/>
    </ligand>
</feature>
<feature type="binding site" evidence="1">
    <location>
        <position position="333"/>
    </location>
    <ligand>
        <name>ATP</name>
        <dbReference type="ChEBI" id="CHEBI:30616"/>
    </ligand>
</feature>
<gene>
    <name evidence="1" type="primary">metG</name>
    <name type="ordered locus">BH0587</name>
</gene>
<evidence type="ECO:0000255" key="1">
    <source>
        <dbReference type="HAMAP-Rule" id="MF_00098"/>
    </source>
</evidence>
<sequence>MKKKNLITAALPYVNNIPHLGNLVQVLSADAFARYSRMMGIETLYVCGTDEYGTATETKALIEKTTPEELCNKYYEIHKSIYEWFNIKFDIFGRTTNKRHKETVQDLFLKLEKNGYTTEKESEQFFCKQDQMFLADRYVTGECPNCGNNAKGDQCENCSKLLSPTDLINPKCIICKNIPIIKTTKHIYIDLPKIKDELSHWMQITELNTNWNTNAIKITNAFLRDGLKERAITRDLKWGIPVPKKEYENKVFYVWFDAPIGYISITKEISKDWESWWKNNEETNLVQFIGKDNILFHTVIFPSIALGSKENWTMLSKLASSEYLNYENLKFSKSAGTGIFGNDVITTGIPSDIWRFYIYYNRPEKSDFQFMWDDFMERVNSELIGNFSNLVNRVLTFYKKFFGDQIDKIEIKEDFWQEINLKYDKTLNFFKQVELKSALKEILDISRTGNKIFQDKEPWKTKDSTPQKTKELLLNLIYLIRDLSILISPFIPHTSDKIRRFFGNSYEISNRFLGTNLGLSTIQFTEVLFIKLEKHLINSLKLKYSGSKNMQDEQTSNQINPINLFSEQVCLKVVQVKTIERNPDAEKLFILKLNDGSSDGKQIVSSLADYYKEEELIGKHIIIVDNLKPAKFRGIKSEGMLIATEDKDKNFKVIIVEDFKDNPIPGERIILESDSYKELKSPAKISIDKFFKTQIVAENGELKINGINLILEHSKEKILSIEIPNGKVY</sequence>
<organism>
    <name type="scientific">Borrelia hermsii (strain HS1 / DAH)</name>
    <dbReference type="NCBI Taxonomy" id="314723"/>
    <lineage>
        <taxon>Bacteria</taxon>
        <taxon>Pseudomonadati</taxon>
        <taxon>Spirochaetota</taxon>
        <taxon>Spirochaetia</taxon>
        <taxon>Spirochaetales</taxon>
        <taxon>Borreliaceae</taxon>
        <taxon>Borrelia</taxon>
    </lineage>
</organism>